<accession>A7ZIG9</accession>
<proteinExistence type="inferred from homology"/>
<reference key="1">
    <citation type="journal article" date="2008" name="J. Bacteriol.">
        <title>The pangenome structure of Escherichia coli: comparative genomic analysis of E. coli commensal and pathogenic isolates.</title>
        <authorList>
            <person name="Rasko D.A."/>
            <person name="Rosovitz M.J."/>
            <person name="Myers G.S.A."/>
            <person name="Mongodin E.F."/>
            <person name="Fricke W.F."/>
            <person name="Gajer P."/>
            <person name="Crabtree J."/>
            <person name="Sebaihia M."/>
            <person name="Thomson N.R."/>
            <person name="Chaudhuri R."/>
            <person name="Henderson I.R."/>
            <person name="Sperandio V."/>
            <person name="Ravel J."/>
        </authorList>
    </citation>
    <scope>NUCLEOTIDE SEQUENCE [LARGE SCALE GENOMIC DNA]</scope>
    <source>
        <strain>E24377A / ETEC</strain>
    </source>
</reference>
<protein>
    <recommendedName>
        <fullName evidence="1">Transcription antitermination protein NusB</fullName>
    </recommendedName>
    <alternativeName>
        <fullName evidence="1">Antitermination factor NusB</fullName>
    </alternativeName>
</protein>
<comment type="function">
    <text evidence="1">Involved in transcription antitermination. Required for transcription of ribosomal RNA (rRNA) genes. Binds specifically to the boxA antiterminator sequence of the ribosomal RNA (rrn) operons.</text>
</comment>
<comment type="similarity">
    <text evidence="1">Belongs to the NusB family.</text>
</comment>
<gene>
    <name evidence="1" type="primary">nusB</name>
    <name type="ordered locus">EcE24377A_0447</name>
</gene>
<evidence type="ECO:0000255" key="1">
    <source>
        <dbReference type="HAMAP-Rule" id="MF_00073"/>
    </source>
</evidence>
<feature type="chain" id="PRO_1000057495" description="Transcription antitermination protein NusB">
    <location>
        <begin position="1"/>
        <end position="139"/>
    </location>
</feature>
<keyword id="KW-1185">Reference proteome</keyword>
<keyword id="KW-0694">RNA-binding</keyword>
<keyword id="KW-0804">Transcription</keyword>
<keyword id="KW-0889">Transcription antitermination</keyword>
<keyword id="KW-0805">Transcription regulation</keyword>
<name>NUSB_ECO24</name>
<organism>
    <name type="scientific">Escherichia coli O139:H28 (strain E24377A / ETEC)</name>
    <dbReference type="NCBI Taxonomy" id="331111"/>
    <lineage>
        <taxon>Bacteria</taxon>
        <taxon>Pseudomonadati</taxon>
        <taxon>Pseudomonadota</taxon>
        <taxon>Gammaproteobacteria</taxon>
        <taxon>Enterobacterales</taxon>
        <taxon>Enterobacteriaceae</taxon>
        <taxon>Escherichia</taxon>
    </lineage>
</organism>
<dbReference type="EMBL" id="CP000800">
    <property type="protein sequence ID" value="ABV16621.1"/>
    <property type="molecule type" value="Genomic_DNA"/>
</dbReference>
<dbReference type="RefSeq" id="WP_000801125.1">
    <property type="nucleotide sequence ID" value="NC_009801.1"/>
</dbReference>
<dbReference type="BMRB" id="A7ZIG9"/>
<dbReference type="SMR" id="A7ZIG9"/>
<dbReference type="GeneID" id="93777044"/>
<dbReference type="KEGG" id="ecw:EcE24377A_0447"/>
<dbReference type="HOGENOM" id="CLU_087843_4_1_6"/>
<dbReference type="Proteomes" id="UP000001122">
    <property type="component" value="Chromosome"/>
</dbReference>
<dbReference type="GO" id="GO:0005829">
    <property type="term" value="C:cytosol"/>
    <property type="evidence" value="ECO:0007669"/>
    <property type="project" value="TreeGrafter"/>
</dbReference>
<dbReference type="GO" id="GO:0003723">
    <property type="term" value="F:RNA binding"/>
    <property type="evidence" value="ECO:0007669"/>
    <property type="project" value="UniProtKB-UniRule"/>
</dbReference>
<dbReference type="GO" id="GO:0006353">
    <property type="term" value="P:DNA-templated transcription termination"/>
    <property type="evidence" value="ECO:0007669"/>
    <property type="project" value="UniProtKB-UniRule"/>
</dbReference>
<dbReference type="GO" id="GO:0031564">
    <property type="term" value="P:transcription antitermination"/>
    <property type="evidence" value="ECO:0007669"/>
    <property type="project" value="UniProtKB-KW"/>
</dbReference>
<dbReference type="CDD" id="cd00619">
    <property type="entry name" value="Terminator_NusB"/>
    <property type="match status" value="1"/>
</dbReference>
<dbReference type="FunFam" id="1.10.940.10:FF:000001">
    <property type="entry name" value="Transcription antitermination factor NusB"/>
    <property type="match status" value="1"/>
</dbReference>
<dbReference type="Gene3D" id="1.10.940.10">
    <property type="entry name" value="NusB-like"/>
    <property type="match status" value="1"/>
</dbReference>
<dbReference type="HAMAP" id="MF_00073">
    <property type="entry name" value="NusB"/>
    <property type="match status" value="1"/>
</dbReference>
<dbReference type="InterPro" id="IPR035926">
    <property type="entry name" value="NusB-like_sf"/>
</dbReference>
<dbReference type="InterPro" id="IPR011605">
    <property type="entry name" value="NusB_fam"/>
</dbReference>
<dbReference type="InterPro" id="IPR006027">
    <property type="entry name" value="NusB_RsmB_TIM44"/>
</dbReference>
<dbReference type="NCBIfam" id="TIGR01951">
    <property type="entry name" value="nusB"/>
    <property type="match status" value="1"/>
</dbReference>
<dbReference type="PANTHER" id="PTHR11078:SF3">
    <property type="entry name" value="ANTITERMINATION NUSB DOMAIN-CONTAINING PROTEIN"/>
    <property type="match status" value="1"/>
</dbReference>
<dbReference type="PANTHER" id="PTHR11078">
    <property type="entry name" value="N UTILIZATION SUBSTANCE PROTEIN B-RELATED"/>
    <property type="match status" value="1"/>
</dbReference>
<dbReference type="Pfam" id="PF01029">
    <property type="entry name" value="NusB"/>
    <property type="match status" value="1"/>
</dbReference>
<dbReference type="SUPFAM" id="SSF48013">
    <property type="entry name" value="NusB-like"/>
    <property type="match status" value="1"/>
</dbReference>
<sequence>MKPAARRRARECAVQALYSWQLSQNDIADVEYQFLAEQDVKDVDVLYFRELLAGVATNTAYLDGLMKPYLSRLLEELGQVEKAVLRIALYELSKRSDVPYKVAINEAIELAKSFGAEDSHKFVNGVLDKAAPVIRPNKK</sequence>